<dbReference type="EC" id="3.1.1.29" evidence="1"/>
<dbReference type="EMBL" id="AE006641">
    <property type="protein sequence ID" value="AAK40521.1"/>
    <property type="molecule type" value="Genomic_DNA"/>
</dbReference>
<dbReference type="PIR" id="B90158">
    <property type="entry name" value="B90158"/>
</dbReference>
<dbReference type="PDB" id="1XTY">
    <property type="method" value="X-ray"/>
    <property type="resolution" value="1.80 A"/>
    <property type="chains" value="A/B/C/D=1-120"/>
</dbReference>
<dbReference type="PDBsum" id="1XTY"/>
<dbReference type="SMR" id="Q980V1"/>
<dbReference type="FunCoup" id="Q980V1">
    <property type="interactions" value="239"/>
</dbReference>
<dbReference type="STRING" id="273057.SSO0175"/>
<dbReference type="PaxDb" id="273057-SSO0175"/>
<dbReference type="EnsemblBacteria" id="AAK40521">
    <property type="protein sequence ID" value="AAK40521"/>
    <property type="gene ID" value="SSO0175"/>
</dbReference>
<dbReference type="KEGG" id="sso:SSO0175"/>
<dbReference type="PATRIC" id="fig|273057.12.peg.171"/>
<dbReference type="eggNOG" id="arCOG04228">
    <property type="taxonomic scope" value="Archaea"/>
</dbReference>
<dbReference type="HOGENOM" id="CLU_073661_2_2_2"/>
<dbReference type="InParanoid" id="Q980V1"/>
<dbReference type="PhylomeDB" id="Q980V1"/>
<dbReference type="BRENDA" id="3.1.1.29">
    <property type="organism ID" value="6163"/>
</dbReference>
<dbReference type="EvolutionaryTrace" id="Q980V1"/>
<dbReference type="Proteomes" id="UP000001974">
    <property type="component" value="Chromosome"/>
</dbReference>
<dbReference type="GO" id="GO:0005829">
    <property type="term" value="C:cytosol"/>
    <property type="evidence" value="ECO:0000318"/>
    <property type="project" value="GO_Central"/>
</dbReference>
<dbReference type="GO" id="GO:0004045">
    <property type="term" value="F:peptidyl-tRNA hydrolase activity"/>
    <property type="evidence" value="ECO:0000318"/>
    <property type="project" value="GO_Central"/>
</dbReference>
<dbReference type="GO" id="GO:0006412">
    <property type="term" value="P:translation"/>
    <property type="evidence" value="ECO:0007669"/>
    <property type="project" value="UniProtKB-UniRule"/>
</dbReference>
<dbReference type="CDD" id="cd02430">
    <property type="entry name" value="PTH2"/>
    <property type="match status" value="1"/>
</dbReference>
<dbReference type="FunFam" id="3.40.1490.10:FF:000001">
    <property type="entry name" value="Peptidyl-tRNA hydrolase 2"/>
    <property type="match status" value="1"/>
</dbReference>
<dbReference type="Gene3D" id="3.40.1490.10">
    <property type="entry name" value="Bit1"/>
    <property type="match status" value="1"/>
</dbReference>
<dbReference type="HAMAP" id="MF_00628">
    <property type="entry name" value="Pept_tRNA_hydro_arch"/>
    <property type="match status" value="1"/>
</dbReference>
<dbReference type="InterPro" id="IPR023476">
    <property type="entry name" value="Pep_tRNA_hydro_II_dom_sf"/>
</dbReference>
<dbReference type="InterPro" id="IPR034759">
    <property type="entry name" value="Pept_tRNA_hydro_arch"/>
</dbReference>
<dbReference type="InterPro" id="IPR002833">
    <property type="entry name" value="PTH2"/>
</dbReference>
<dbReference type="NCBIfam" id="TIGR00283">
    <property type="entry name" value="arch_pth2"/>
    <property type="match status" value="1"/>
</dbReference>
<dbReference type="NCBIfam" id="NF003314">
    <property type="entry name" value="PRK04322.1"/>
    <property type="match status" value="1"/>
</dbReference>
<dbReference type="PANTHER" id="PTHR12649">
    <property type="entry name" value="PEPTIDYL-TRNA HYDROLASE 2"/>
    <property type="match status" value="1"/>
</dbReference>
<dbReference type="PANTHER" id="PTHR12649:SF11">
    <property type="entry name" value="PEPTIDYL-TRNA HYDROLASE 2, MITOCHONDRIAL"/>
    <property type="match status" value="1"/>
</dbReference>
<dbReference type="Pfam" id="PF01981">
    <property type="entry name" value="PTH2"/>
    <property type="match status" value="1"/>
</dbReference>
<dbReference type="SUPFAM" id="SSF102462">
    <property type="entry name" value="Peptidyl-tRNA hydrolase II"/>
    <property type="match status" value="1"/>
</dbReference>
<protein>
    <recommendedName>
        <fullName evidence="1">Peptidyl-tRNA hydrolase</fullName>
        <shortName evidence="1">PTH</shortName>
        <ecNumber evidence="1">3.1.1.29</ecNumber>
    </recommendedName>
</protein>
<organism>
    <name type="scientific">Saccharolobus solfataricus (strain ATCC 35092 / DSM 1617 / JCM 11322 / P2)</name>
    <name type="common">Sulfolobus solfataricus</name>
    <dbReference type="NCBI Taxonomy" id="273057"/>
    <lineage>
        <taxon>Archaea</taxon>
        <taxon>Thermoproteota</taxon>
        <taxon>Thermoprotei</taxon>
        <taxon>Sulfolobales</taxon>
        <taxon>Sulfolobaceae</taxon>
        <taxon>Saccharolobus</taxon>
    </lineage>
</organism>
<evidence type="ECO:0000255" key="1">
    <source>
        <dbReference type="HAMAP-Rule" id="MF_00628"/>
    </source>
</evidence>
<evidence type="ECO:0000269" key="2">
    <source>
    </source>
</evidence>
<evidence type="ECO:0007829" key="3">
    <source>
        <dbReference type="PDB" id="1XTY"/>
    </source>
</evidence>
<comment type="function">
    <text evidence="1 2">The natural substrate for this enzyme may be peptidyl-tRNAs which drop off the ribosome during protein synthesis.</text>
</comment>
<comment type="catalytic activity">
    <reaction evidence="1">
        <text>an N-acyl-L-alpha-aminoacyl-tRNA + H2O = an N-acyl-L-amino acid + a tRNA + H(+)</text>
        <dbReference type="Rhea" id="RHEA:54448"/>
        <dbReference type="Rhea" id="RHEA-COMP:10123"/>
        <dbReference type="Rhea" id="RHEA-COMP:13883"/>
        <dbReference type="ChEBI" id="CHEBI:15377"/>
        <dbReference type="ChEBI" id="CHEBI:15378"/>
        <dbReference type="ChEBI" id="CHEBI:59874"/>
        <dbReference type="ChEBI" id="CHEBI:78442"/>
        <dbReference type="ChEBI" id="CHEBI:138191"/>
        <dbReference type="EC" id="3.1.1.29"/>
    </reaction>
</comment>
<comment type="subunit">
    <text>Homodimer.</text>
</comment>
<comment type="subcellular location">
    <subcellularLocation>
        <location>Cytoplasm</location>
    </subcellularLocation>
</comment>
<comment type="similarity">
    <text evidence="1">Belongs to the PTH2 family.</text>
</comment>
<keyword id="KW-0002">3D-structure</keyword>
<keyword id="KW-0963">Cytoplasm</keyword>
<keyword id="KW-0903">Direct protein sequencing</keyword>
<keyword id="KW-0378">Hydrolase</keyword>
<keyword id="KW-1185">Reference proteome</keyword>
<gene>
    <name evidence="1" type="primary">pth</name>
    <name type="ordered locus">SSO0175</name>
</gene>
<accession>Q980V1</accession>
<proteinExistence type="evidence at protein level"/>
<sequence>MIKMVIVVRSDIKMGKGKIAAQVAHAAVTLVVSIINSNNLRWKEWLNEWLHQGQPKIIVKVNSLDEIISRAKKAETMNLPFSIIEDAGKTQLEPGTITCLGIGPAPENLVDSITGDLKLL</sequence>
<name>PTH_SACS2</name>
<feature type="chain" id="PRO_0000120304" description="Peptidyl-tRNA hydrolase">
    <location>
        <begin position="1"/>
        <end position="120"/>
    </location>
</feature>
<feature type="strand" evidence="3">
    <location>
        <begin position="2"/>
        <end position="12"/>
    </location>
</feature>
<feature type="helix" evidence="3">
    <location>
        <begin position="16"/>
        <end position="35"/>
    </location>
</feature>
<feature type="helix" evidence="3">
    <location>
        <begin position="40"/>
        <end position="51"/>
    </location>
</feature>
<feature type="strand" evidence="3">
    <location>
        <begin position="56"/>
        <end position="63"/>
    </location>
</feature>
<feature type="helix" evidence="3">
    <location>
        <begin position="64"/>
        <end position="76"/>
    </location>
</feature>
<feature type="strand" evidence="3">
    <location>
        <begin position="81"/>
        <end position="85"/>
    </location>
</feature>
<feature type="strand" evidence="3">
    <location>
        <begin position="88"/>
        <end position="92"/>
    </location>
</feature>
<feature type="strand" evidence="3">
    <location>
        <begin position="97"/>
        <end position="106"/>
    </location>
</feature>
<feature type="helix" evidence="3">
    <location>
        <begin position="107"/>
        <end position="114"/>
    </location>
</feature>
<reference key="1">
    <citation type="journal article" date="2001" name="Proc. Natl. Acad. Sci. U.S.A.">
        <title>The complete genome of the crenarchaeon Sulfolobus solfataricus P2.</title>
        <authorList>
            <person name="She Q."/>
            <person name="Singh R.K."/>
            <person name="Confalonieri F."/>
            <person name="Zivanovic Y."/>
            <person name="Allard G."/>
            <person name="Awayez M.J."/>
            <person name="Chan-Weiher C.C.-Y."/>
            <person name="Clausen I.G."/>
            <person name="Curtis B.A."/>
            <person name="De Moors A."/>
            <person name="Erauso G."/>
            <person name="Fletcher C."/>
            <person name="Gordon P.M.K."/>
            <person name="Heikamp-de Jong I."/>
            <person name="Jeffries A.C."/>
            <person name="Kozera C.J."/>
            <person name="Medina N."/>
            <person name="Peng X."/>
            <person name="Thi-Ngoc H.P."/>
            <person name="Redder P."/>
            <person name="Schenk M.E."/>
            <person name="Theriault C."/>
            <person name="Tolstrup N."/>
            <person name="Charlebois R.L."/>
            <person name="Doolittle W.F."/>
            <person name="Duguet M."/>
            <person name="Gaasterland T."/>
            <person name="Garrett R.A."/>
            <person name="Ragan M.A."/>
            <person name="Sensen C.W."/>
            <person name="Van der Oost J."/>
        </authorList>
    </citation>
    <scope>NUCLEOTIDE SEQUENCE [LARGE SCALE GENOMIC DNA]</scope>
    <source>
        <strain>ATCC 35092 / DSM 1617 / JCM 11322 / P2</strain>
    </source>
</reference>
<reference key="2">
    <citation type="journal article" date="2003" name="Nucleic Acids Res.">
        <title>Peptidyl-tRNA hydrolase from Sulfolobus solfataricus.</title>
        <authorList>
            <person name="Fromant M."/>
            <person name="Ferri-Fioni M.-L."/>
            <person name="Plateau P."/>
            <person name="Blanquet S."/>
        </authorList>
    </citation>
    <scope>PROTEIN SEQUENCE OF 1-10</scope>
    <scope>FUNCTION</scope>
    <scope>CHARACTERIZATION</scope>
    <source>
        <strain>ATCC 35092 / DSM 1617 / JCM 11322 / P2</strain>
    </source>
</reference>